<dbReference type="EMBL" id="CR380959">
    <property type="protein sequence ID" value="CAG62608.1"/>
    <property type="molecule type" value="Genomic_DNA"/>
</dbReference>
<dbReference type="RefSeq" id="XP_449632.1">
    <property type="nucleotide sequence ID" value="XM_449632.1"/>
</dbReference>
<dbReference type="FunCoup" id="Q6FJG2">
    <property type="interactions" value="38"/>
</dbReference>
<dbReference type="STRING" id="284593.Q6FJG2"/>
<dbReference type="GlyCosmos" id="Q6FJG2">
    <property type="glycosylation" value="6 sites, No reported glycans"/>
</dbReference>
<dbReference type="EnsemblFungi" id="CAGL0M06545g-T">
    <property type="protein sequence ID" value="CAGL0M06545g-T-p1"/>
    <property type="gene ID" value="CAGL0M06545g"/>
</dbReference>
<dbReference type="KEGG" id="cgr:2891680"/>
<dbReference type="CGD" id="CAL0136467">
    <property type="gene designation" value="CAGL0M06545g"/>
</dbReference>
<dbReference type="VEuPathDB" id="FungiDB:CAGL0M06545g"/>
<dbReference type="eggNOG" id="KOG1477">
    <property type="taxonomic scope" value="Eukaryota"/>
</dbReference>
<dbReference type="HOGENOM" id="CLU_026177_0_0_1"/>
<dbReference type="InParanoid" id="Q6FJG2"/>
<dbReference type="OMA" id="FIKDRGI"/>
<dbReference type="Proteomes" id="UP000002428">
    <property type="component" value="Chromosome M"/>
</dbReference>
<dbReference type="GO" id="GO:0010008">
    <property type="term" value="C:endosome membrane"/>
    <property type="evidence" value="ECO:0007669"/>
    <property type="project" value="UniProtKB-SubCell"/>
</dbReference>
<dbReference type="GO" id="GO:0000324">
    <property type="term" value="C:fungal-type vacuole"/>
    <property type="evidence" value="ECO:0007669"/>
    <property type="project" value="EnsemblFungi"/>
</dbReference>
<dbReference type="GO" id="GO:0005774">
    <property type="term" value="C:vacuolar membrane"/>
    <property type="evidence" value="ECO:0007669"/>
    <property type="project" value="UniProtKB-SubCell"/>
</dbReference>
<dbReference type="GO" id="GO:1990756">
    <property type="term" value="F:ubiquitin-like ligase-substrate adaptor activity"/>
    <property type="evidence" value="ECO:0007669"/>
    <property type="project" value="EnsemblFungi"/>
</dbReference>
<dbReference type="GO" id="GO:0043328">
    <property type="term" value="P:protein transport to vacuole involved in ubiquitin-dependent protein catabolic process via the multivesicular body sorting pathway"/>
    <property type="evidence" value="ECO:0007669"/>
    <property type="project" value="EnsemblFungi"/>
</dbReference>
<dbReference type="Gene3D" id="2.60.120.920">
    <property type="match status" value="1"/>
</dbReference>
<dbReference type="InterPro" id="IPR001870">
    <property type="entry name" value="B30.2/SPRY"/>
</dbReference>
<dbReference type="InterPro" id="IPR043136">
    <property type="entry name" value="B30.2/SPRY_sf"/>
</dbReference>
<dbReference type="InterPro" id="IPR013320">
    <property type="entry name" value="ConA-like_dom_sf"/>
</dbReference>
<dbReference type="InterPro" id="IPR003877">
    <property type="entry name" value="SPRY_dom"/>
</dbReference>
<dbReference type="InterPro" id="IPR050618">
    <property type="entry name" value="Ubq-SigPath_Reg"/>
</dbReference>
<dbReference type="PANTHER" id="PTHR12864">
    <property type="entry name" value="RAN BINDING PROTEIN 9-RELATED"/>
    <property type="match status" value="1"/>
</dbReference>
<dbReference type="Pfam" id="PF00622">
    <property type="entry name" value="SPRY"/>
    <property type="match status" value="1"/>
</dbReference>
<dbReference type="SMART" id="SM00449">
    <property type="entry name" value="SPRY"/>
    <property type="match status" value="1"/>
</dbReference>
<dbReference type="SUPFAM" id="SSF49899">
    <property type="entry name" value="Concanavalin A-like lectins/glucanases"/>
    <property type="match status" value="1"/>
</dbReference>
<dbReference type="PROSITE" id="PS50188">
    <property type="entry name" value="B302_SPRY"/>
    <property type="match status" value="1"/>
</dbReference>
<gene>
    <name type="primary">SSH4</name>
    <name type="ordered locus">CAGL0M06545g</name>
</gene>
<feature type="chain" id="PRO_0000324479" description="Protein SSH4">
    <location>
        <begin position="1"/>
        <end position="587"/>
    </location>
</feature>
<feature type="topological domain" description="Cytoplasmic" evidence="2">
    <location>
        <begin position="1"/>
        <end position="33"/>
    </location>
</feature>
<feature type="transmembrane region" description="Helical; Signal-anchor for type II membrane protein" evidence="2">
    <location>
        <begin position="34"/>
        <end position="54"/>
    </location>
</feature>
<feature type="topological domain" description="Lumenal" evidence="2">
    <location>
        <begin position="55"/>
        <end position="587"/>
    </location>
</feature>
<feature type="domain" description="B30.2/SPRY" evidence="3">
    <location>
        <begin position="162"/>
        <end position="349"/>
    </location>
</feature>
<feature type="region of interest" description="Disordered" evidence="4">
    <location>
        <begin position="509"/>
        <end position="587"/>
    </location>
</feature>
<feature type="compositionally biased region" description="Low complexity" evidence="4">
    <location>
        <begin position="535"/>
        <end position="551"/>
    </location>
</feature>
<feature type="compositionally biased region" description="Basic residues" evidence="4">
    <location>
        <begin position="566"/>
        <end position="587"/>
    </location>
</feature>
<feature type="glycosylation site" description="N-linked (GlcNAc...) asparagine" evidence="2">
    <location>
        <position position="105"/>
    </location>
</feature>
<feature type="glycosylation site" description="N-linked (GlcNAc...) asparagine" evidence="2">
    <location>
        <position position="208"/>
    </location>
</feature>
<feature type="glycosylation site" description="N-linked (GlcNAc...) asparagine" evidence="2">
    <location>
        <position position="321"/>
    </location>
</feature>
<feature type="glycosylation site" description="N-linked (GlcNAc...) asparagine" evidence="2">
    <location>
        <position position="334"/>
    </location>
</feature>
<feature type="glycosylation site" description="N-linked (GlcNAc...) asparagine" evidence="2">
    <location>
        <position position="527"/>
    </location>
</feature>
<feature type="glycosylation site" description="N-linked (GlcNAc...) asparagine" evidence="2">
    <location>
        <position position="538"/>
    </location>
</feature>
<protein>
    <recommendedName>
        <fullName>Protein SSH4</fullName>
    </recommendedName>
</protein>
<name>SSH4_CANGA</name>
<proteinExistence type="inferred from homology"/>
<accession>Q6FJG2</accession>
<keyword id="KW-0967">Endosome</keyword>
<keyword id="KW-0325">Glycoprotein</keyword>
<keyword id="KW-0472">Membrane</keyword>
<keyword id="KW-0653">Protein transport</keyword>
<keyword id="KW-1185">Reference proteome</keyword>
<keyword id="KW-0735">Signal-anchor</keyword>
<keyword id="KW-0812">Transmembrane</keyword>
<keyword id="KW-1133">Transmembrane helix</keyword>
<keyword id="KW-0813">Transport</keyword>
<keyword id="KW-0926">Vacuole</keyword>
<sequence>MPLIPDSIQSIGVFHVDDPFNPMPDPGDADPETVAFAFFIGIAVVFSLLLITLVCTAAYLVCTSSYEGEYDEELANNGDGSRRGILNFRPLFGKKNSNGLLLDSNFTNPGEFDDNEEFIEREREALIKMSPFEVDSYMRAKEFQIVSPPAVQEFGTYLDSKDLQMIKDRGIQSYYFIPSINDNVDKSGHFLPSFLVQDKLEVEFTRWNKSSSAVLNYPLPYNKKDAVYFEVKVYNHKPNSNSIFSIGLVTVPYPYFRIPGMCKFSIAYESTGKLRINDPFFPSTLLPKLVEGDVVGFGYRFKTGTIFITHNGKKLMDVTQNVSVELFIALGAMNASYTRTYTKDGLLEDPDNIELRNALAEGRELKLSKDIQNPHNPMDETKWDIIDSDEIELHVNLGQTGFVFIEANVKKYGFGSVFGEIGIPPAYNPNDIQKDKLIQKGEELPPQYPEDTENFGLFGNLKIKSHIKNPLKEVSSNPSAPELIQKKLKTPIVKTPKVGIYEFTTPIDRKRETNMQPSINPPVYEINDTRQSSPEITNETISNEETVSSSSKAEPALQHGQSNKTPNKRQNKKTKQRKNKKKGKKNK</sequence>
<evidence type="ECO:0000250" key="1"/>
<evidence type="ECO:0000255" key="2"/>
<evidence type="ECO:0000255" key="3">
    <source>
        <dbReference type="PROSITE-ProRule" id="PRU00548"/>
    </source>
</evidence>
<evidence type="ECO:0000256" key="4">
    <source>
        <dbReference type="SAM" id="MobiDB-lite"/>
    </source>
</evidence>
<evidence type="ECO:0000305" key="5"/>
<comment type="function">
    <text evidence="1">Components of the endosome-vacuole trafficking pathway that regulates nutrient transport. May be involved in processes which determine whether plasma membrane proteins are degraded or routed to the plasma membrane (By similarity).</text>
</comment>
<comment type="subcellular location">
    <subcellularLocation>
        <location evidence="1">Vacuole membrane</location>
        <topology evidence="1">Single-pass type II membrane protein</topology>
    </subcellularLocation>
    <subcellularLocation>
        <location evidence="1">Endosome membrane</location>
        <topology evidence="1">Single-pass type II membrane protein</topology>
    </subcellularLocation>
</comment>
<comment type="similarity">
    <text evidence="5">Belongs to the SSH4 family.</text>
</comment>
<reference key="1">
    <citation type="journal article" date="2004" name="Nature">
        <title>Genome evolution in yeasts.</title>
        <authorList>
            <person name="Dujon B."/>
            <person name="Sherman D."/>
            <person name="Fischer G."/>
            <person name="Durrens P."/>
            <person name="Casaregola S."/>
            <person name="Lafontaine I."/>
            <person name="de Montigny J."/>
            <person name="Marck C."/>
            <person name="Neuveglise C."/>
            <person name="Talla E."/>
            <person name="Goffard N."/>
            <person name="Frangeul L."/>
            <person name="Aigle M."/>
            <person name="Anthouard V."/>
            <person name="Babour A."/>
            <person name="Barbe V."/>
            <person name="Barnay S."/>
            <person name="Blanchin S."/>
            <person name="Beckerich J.-M."/>
            <person name="Beyne E."/>
            <person name="Bleykasten C."/>
            <person name="Boisrame A."/>
            <person name="Boyer J."/>
            <person name="Cattolico L."/>
            <person name="Confanioleri F."/>
            <person name="de Daruvar A."/>
            <person name="Despons L."/>
            <person name="Fabre E."/>
            <person name="Fairhead C."/>
            <person name="Ferry-Dumazet H."/>
            <person name="Groppi A."/>
            <person name="Hantraye F."/>
            <person name="Hennequin C."/>
            <person name="Jauniaux N."/>
            <person name="Joyet P."/>
            <person name="Kachouri R."/>
            <person name="Kerrest A."/>
            <person name="Koszul R."/>
            <person name="Lemaire M."/>
            <person name="Lesur I."/>
            <person name="Ma L."/>
            <person name="Muller H."/>
            <person name="Nicaud J.-M."/>
            <person name="Nikolski M."/>
            <person name="Oztas S."/>
            <person name="Ozier-Kalogeropoulos O."/>
            <person name="Pellenz S."/>
            <person name="Potier S."/>
            <person name="Richard G.-F."/>
            <person name="Straub M.-L."/>
            <person name="Suleau A."/>
            <person name="Swennen D."/>
            <person name="Tekaia F."/>
            <person name="Wesolowski-Louvel M."/>
            <person name="Westhof E."/>
            <person name="Wirth B."/>
            <person name="Zeniou-Meyer M."/>
            <person name="Zivanovic Y."/>
            <person name="Bolotin-Fukuhara M."/>
            <person name="Thierry A."/>
            <person name="Bouchier C."/>
            <person name="Caudron B."/>
            <person name="Scarpelli C."/>
            <person name="Gaillardin C."/>
            <person name="Weissenbach J."/>
            <person name="Wincker P."/>
            <person name="Souciet J.-L."/>
        </authorList>
    </citation>
    <scope>NUCLEOTIDE SEQUENCE [LARGE SCALE GENOMIC DNA]</scope>
    <source>
        <strain>ATCC 2001 / BCRC 20586 / JCM 3761 / NBRC 0622 / NRRL Y-65 / CBS 138</strain>
    </source>
</reference>
<organism>
    <name type="scientific">Candida glabrata (strain ATCC 2001 / BCRC 20586 / JCM 3761 / NBRC 0622 / NRRL Y-65 / CBS 138)</name>
    <name type="common">Yeast</name>
    <name type="synonym">Nakaseomyces glabratus</name>
    <dbReference type="NCBI Taxonomy" id="284593"/>
    <lineage>
        <taxon>Eukaryota</taxon>
        <taxon>Fungi</taxon>
        <taxon>Dikarya</taxon>
        <taxon>Ascomycota</taxon>
        <taxon>Saccharomycotina</taxon>
        <taxon>Saccharomycetes</taxon>
        <taxon>Saccharomycetales</taxon>
        <taxon>Saccharomycetaceae</taxon>
        <taxon>Nakaseomyces</taxon>
    </lineage>
</organism>